<evidence type="ECO:0000250" key="1">
    <source>
        <dbReference type="UniProtKB" id="P37351"/>
    </source>
</evidence>
<evidence type="ECO:0000269" key="2">
    <source>
    </source>
</evidence>
<evidence type="ECO:0000303" key="3">
    <source>
    </source>
</evidence>
<evidence type="ECO:0000305" key="4"/>
<evidence type="ECO:0000312" key="5">
    <source>
        <dbReference type="EMBL" id="ABK71442.1"/>
    </source>
</evidence>
<evidence type="ECO:0000312" key="6">
    <source>
        <dbReference type="EMBL" id="AFP43030.1"/>
    </source>
</evidence>
<dbReference type="EC" id="5.3.1.34" evidence="2"/>
<dbReference type="EMBL" id="CP000480">
    <property type="protein sequence ID" value="ABK71442.1"/>
    <property type="molecule type" value="Genomic_DNA"/>
</dbReference>
<dbReference type="EMBL" id="CP001663">
    <property type="protein sequence ID" value="AFP43030.1"/>
    <property type="molecule type" value="Genomic_DNA"/>
</dbReference>
<dbReference type="RefSeq" id="WP_011731539.1">
    <property type="nucleotide sequence ID" value="NZ_SIJM01000001.1"/>
</dbReference>
<dbReference type="RefSeq" id="YP_890995.1">
    <property type="nucleotide sequence ID" value="NC_008596.1"/>
</dbReference>
<dbReference type="SMR" id="A0R757"/>
<dbReference type="STRING" id="246196.MSMEG_6787"/>
<dbReference type="PaxDb" id="246196-MSMEI_6604"/>
<dbReference type="GeneID" id="93461368"/>
<dbReference type="KEGG" id="msb:LJ00_33535"/>
<dbReference type="KEGG" id="msg:MSMEI_6604"/>
<dbReference type="KEGG" id="msm:MSMEG_6787"/>
<dbReference type="PATRIC" id="fig|246196.19.peg.6607"/>
<dbReference type="eggNOG" id="COG0698">
    <property type="taxonomic scope" value="Bacteria"/>
</dbReference>
<dbReference type="OrthoDB" id="1778624at2"/>
<dbReference type="UniPathway" id="UPA01065"/>
<dbReference type="UniPathway" id="UPA01066"/>
<dbReference type="UniPathway" id="UPA01067"/>
<dbReference type="Proteomes" id="UP000000757">
    <property type="component" value="Chromosome"/>
</dbReference>
<dbReference type="Proteomes" id="UP000006158">
    <property type="component" value="Chromosome"/>
</dbReference>
<dbReference type="GO" id="GO:0016861">
    <property type="term" value="F:intramolecular oxidoreductase activity, interconverting aldoses and ketoses"/>
    <property type="evidence" value="ECO:0000314"/>
    <property type="project" value="UniProtKB"/>
</dbReference>
<dbReference type="GO" id="GO:0016052">
    <property type="term" value="P:carbohydrate catabolic process"/>
    <property type="evidence" value="ECO:0000315"/>
    <property type="project" value="UniProtKB"/>
</dbReference>
<dbReference type="GO" id="GO:0009758">
    <property type="term" value="P:carbohydrate utilization"/>
    <property type="evidence" value="ECO:0000315"/>
    <property type="project" value="UniProtKB"/>
</dbReference>
<dbReference type="GO" id="GO:0071322">
    <property type="term" value="P:cellular response to carbohydrate stimulus"/>
    <property type="evidence" value="ECO:0000314"/>
    <property type="project" value="UniProtKB"/>
</dbReference>
<dbReference type="FunFam" id="3.40.1400.10:FF:000004">
    <property type="entry name" value="Ribose 5-phosphate isomerase"/>
    <property type="match status" value="1"/>
</dbReference>
<dbReference type="Gene3D" id="3.40.1400.10">
    <property type="entry name" value="Sugar-phosphate isomerase, RpiB/LacA/LacB"/>
    <property type="match status" value="1"/>
</dbReference>
<dbReference type="InterPro" id="IPR011860">
    <property type="entry name" value="Rib-5-P_Isoase_Actino"/>
</dbReference>
<dbReference type="InterPro" id="IPR003500">
    <property type="entry name" value="RpiB_LacA_LacB"/>
</dbReference>
<dbReference type="InterPro" id="IPR036569">
    <property type="entry name" value="RpiB_LacA_LacB_sf"/>
</dbReference>
<dbReference type="InterPro" id="IPR051812">
    <property type="entry name" value="SPI_LacAB/RpiB"/>
</dbReference>
<dbReference type="NCBIfam" id="NF004051">
    <property type="entry name" value="PRK05571.1"/>
    <property type="match status" value="1"/>
</dbReference>
<dbReference type="NCBIfam" id="TIGR02133">
    <property type="entry name" value="RPI_actino"/>
    <property type="match status" value="1"/>
</dbReference>
<dbReference type="NCBIfam" id="TIGR00689">
    <property type="entry name" value="rpiB_lacA_lacB"/>
    <property type="match status" value="1"/>
</dbReference>
<dbReference type="PANTHER" id="PTHR43732:SF1">
    <property type="entry name" value="RIBOSE 5-PHOSPHATE ISOMERASE"/>
    <property type="match status" value="1"/>
</dbReference>
<dbReference type="PANTHER" id="PTHR43732">
    <property type="entry name" value="RIBOSE 5-PHOSPHATE ISOMERASE-RELATED"/>
    <property type="match status" value="1"/>
</dbReference>
<dbReference type="Pfam" id="PF02502">
    <property type="entry name" value="LacAB_rpiB"/>
    <property type="match status" value="1"/>
</dbReference>
<dbReference type="PIRSF" id="PIRSF005384">
    <property type="entry name" value="RpiB_LacA_B"/>
    <property type="match status" value="1"/>
</dbReference>
<dbReference type="SUPFAM" id="SSF89623">
    <property type="entry name" value="Ribose/Galactose isomerase RpiB/AlsB"/>
    <property type="match status" value="1"/>
</dbReference>
<feature type="chain" id="PRO_0000435518" description="D-erythrulose-4-phosphate isomerase 2">
    <location>
        <begin position="1"/>
        <end position="152"/>
    </location>
</feature>
<feature type="active site" description="Proton acceptor" evidence="1">
    <location>
        <position position="70"/>
    </location>
</feature>
<comment type="function">
    <text evidence="2">Catalyzes the isomerization of D-erythrulose-4P to D-erythrose-4P. Involved in the degradation pathways of L-threitol, D-threitol and erythritol, that allow M.smegmatis to grow on these compounds as the sole carbon source.</text>
</comment>
<comment type="catalytic activity">
    <reaction evidence="2">
        <text>D-erythrulose 4-phosphate = D-erythrose 4-phosphate</text>
        <dbReference type="Rhea" id="RHEA:48784"/>
        <dbReference type="ChEBI" id="CHEBI:16897"/>
        <dbReference type="ChEBI" id="CHEBI:90796"/>
        <dbReference type="EC" id="5.3.1.34"/>
    </reaction>
</comment>
<comment type="pathway">
    <text evidence="2">Carbohydrate metabolism; erythritol degradation.</text>
</comment>
<comment type="pathway">
    <text evidence="2">Carbohydrate metabolism; D-threitol degradation.</text>
</comment>
<comment type="pathway">
    <text evidence="2">Carbohydrate metabolism; L-threitol degradation.</text>
</comment>
<comment type="disruption phenotype">
    <text evidence="2">Cells lacking this gene are totally unable to grow on L-threitol. Cells lacking both derI1 and derI2 are totally unable to grow on D-threitol or on erythritol.</text>
</comment>
<comment type="similarity">
    <text evidence="4">Belongs to the LacAB/RpiB family.</text>
</comment>
<reference key="1">
    <citation type="submission" date="2006-10" db="EMBL/GenBank/DDBJ databases">
        <authorList>
            <person name="Fleischmann R.D."/>
            <person name="Dodson R.J."/>
            <person name="Haft D.H."/>
            <person name="Merkel J.S."/>
            <person name="Nelson W.C."/>
            <person name="Fraser C.M."/>
        </authorList>
    </citation>
    <scope>NUCLEOTIDE SEQUENCE [LARGE SCALE GENOMIC DNA]</scope>
    <source>
        <strain>ATCC 700084 / mc(2)155</strain>
    </source>
</reference>
<reference key="2">
    <citation type="journal article" date="2007" name="Genome Biol.">
        <title>Interrupted coding sequences in Mycobacterium smegmatis: authentic mutations or sequencing errors?</title>
        <authorList>
            <person name="Deshayes C."/>
            <person name="Perrodou E."/>
            <person name="Gallien S."/>
            <person name="Euphrasie D."/>
            <person name="Schaeffer C."/>
            <person name="Van-Dorsselaer A."/>
            <person name="Poch O."/>
            <person name="Lecompte O."/>
            <person name="Reyrat J.-M."/>
        </authorList>
    </citation>
    <scope>NUCLEOTIDE SEQUENCE [LARGE SCALE GENOMIC DNA]</scope>
    <source>
        <strain>ATCC 700084 / mc(2)155</strain>
    </source>
</reference>
<reference key="3">
    <citation type="journal article" date="2009" name="Genome Res.">
        <title>Ortho-proteogenomics: multiple proteomes investigation through orthology and a new MS-based protocol.</title>
        <authorList>
            <person name="Gallien S."/>
            <person name="Perrodou E."/>
            <person name="Carapito C."/>
            <person name="Deshayes C."/>
            <person name="Reyrat J.-M."/>
            <person name="Van Dorsselaer A."/>
            <person name="Poch O."/>
            <person name="Schaeffer C."/>
            <person name="Lecompte O."/>
        </authorList>
    </citation>
    <scope>NUCLEOTIDE SEQUENCE [LARGE SCALE GENOMIC DNA]</scope>
    <source>
        <strain>ATCC 700084 / mc(2)155</strain>
    </source>
</reference>
<reference key="4">
    <citation type="journal article" date="2015" name="J. Am. Chem. Soc.">
        <title>A general strategy for the discovery of metabolic pathways: D-threitol, L-threitol, and erythritol utilization in Mycobacterium smegmatis.</title>
        <authorList>
            <person name="Huang H."/>
            <person name="Carter M.S."/>
            <person name="Vetting M.W."/>
            <person name="Al-Obaidi N."/>
            <person name="Patskovsky Y."/>
            <person name="Almo S.C."/>
            <person name="Gerlt J.A."/>
        </authorList>
    </citation>
    <scope>FUNCTION</scope>
    <scope>CATALYTIC ACTIVITY</scope>
    <scope>DISRUPTION PHENOTYPE</scope>
    <scope>PATHWAY</scope>
    <source>
        <strain>ATCC 700084 / mc(2)155</strain>
    </source>
</reference>
<gene>
    <name evidence="3" type="primary">derI2</name>
    <name evidence="5" type="ordered locus">MSMEG_6787</name>
    <name evidence="6" type="ordered locus">MSMEI_6604</name>
</gene>
<sequence>MALKIVIGGDNAGFNYKEALRKDLEADDRVASVEDVGVGGVDDTTSYPNVAVAAAEKVARGEADRALLICGTGLGVAIAANKVKGIRAVTAHDVYSVQRSVLSNNAQVLCMGERVVGLELARALVKEWLGLEFDPQSASAAKVNDICAYEGA</sequence>
<organism>
    <name type="scientific">Mycolicibacterium smegmatis (strain ATCC 700084 / mc(2)155)</name>
    <name type="common">Mycobacterium smegmatis</name>
    <dbReference type="NCBI Taxonomy" id="246196"/>
    <lineage>
        <taxon>Bacteria</taxon>
        <taxon>Bacillati</taxon>
        <taxon>Actinomycetota</taxon>
        <taxon>Actinomycetes</taxon>
        <taxon>Mycobacteriales</taxon>
        <taxon>Mycobacteriaceae</taxon>
        <taxon>Mycolicibacterium</taxon>
    </lineage>
</organism>
<proteinExistence type="evidence at protein level"/>
<protein>
    <recommendedName>
        <fullName evidence="3">D-erythrulose-4-phosphate isomerase 2</fullName>
        <ecNumber evidence="2">5.3.1.34</ecNumber>
    </recommendedName>
</protein>
<name>DERI2_MYCS2</name>
<accession>A0R757</accession>
<keyword id="KW-0119">Carbohydrate metabolism</keyword>
<keyword id="KW-0413">Isomerase</keyword>
<keyword id="KW-1185">Reference proteome</keyword>